<protein>
    <recommendedName>
        <fullName>Sulfite reductase [NADPH] subunit beta</fullName>
        <ecNumber>1.8.1.2</ecNumber>
    </recommendedName>
    <alternativeName>
        <fullName>Extracellular mutant protein 17</fullName>
    </alternativeName>
</protein>
<organism>
    <name type="scientific">Saccharomyces cerevisiae (strain ATCC 204508 / S288c)</name>
    <name type="common">Baker's yeast</name>
    <dbReference type="NCBI Taxonomy" id="559292"/>
    <lineage>
        <taxon>Eukaryota</taxon>
        <taxon>Fungi</taxon>
        <taxon>Dikarya</taxon>
        <taxon>Ascomycota</taxon>
        <taxon>Saccharomycotina</taxon>
        <taxon>Saccharomycetes</taxon>
        <taxon>Saccharomycetales</taxon>
        <taxon>Saccharomycetaceae</taxon>
        <taxon>Saccharomyces</taxon>
    </lineage>
</organism>
<accession>P47169</accession>
<accession>D6VWV6</accession>
<gene>
    <name type="primary">MET5</name>
    <name type="synonym">ECM17</name>
    <name type="ordered locus">YJR137C</name>
    <name type="ORF">J2126</name>
</gene>
<dbReference type="EC" id="1.8.1.2"/>
<dbReference type="EMBL" id="Z49637">
    <property type="protein sequence ID" value="CAA89669.1"/>
    <property type="molecule type" value="Genomic_DNA"/>
</dbReference>
<dbReference type="EMBL" id="BK006943">
    <property type="protein sequence ID" value="DAA08922.1"/>
    <property type="molecule type" value="Genomic_DNA"/>
</dbReference>
<dbReference type="PIR" id="S57160">
    <property type="entry name" value="S57160"/>
</dbReference>
<dbReference type="RefSeq" id="NP_116579.1">
    <property type="nucleotide sequence ID" value="NM_001181795.1"/>
</dbReference>
<dbReference type="SMR" id="P47169"/>
<dbReference type="BioGRID" id="33893">
    <property type="interactions" value="148"/>
</dbReference>
<dbReference type="ComplexPortal" id="CPX-3163">
    <property type="entry name" value="Sulfite reductase complex (NADPH)"/>
</dbReference>
<dbReference type="FunCoup" id="P47169">
    <property type="interactions" value="75"/>
</dbReference>
<dbReference type="IntAct" id="P47169">
    <property type="interactions" value="9"/>
</dbReference>
<dbReference type="STRING" id="4932.YJR137C"/>
<dbReference type="CarbonylDB" id="P47169"/>
<dbReference type="iPTMnet" id="P47169"/>
<dbReference type="PaxDb" id="4932-YJR137C"/>
<dbReference type="PeptideAtlas" id="P47169"/>
<dbReference type="EnsemblFungi" id="YJR137C_mRNA">
    <property type="protein sequence ID" value="YJR137C"/>
    <property type="gene ID" value="YJR137C"/>
</dbReference>
<dbReference type="GeneID" id="853602"/>
<dbReference type="KEGG" id="sce:YJR137C"/>
<dbReference type="AGR" id="SGD:S000003898"/>
<dbReference type="SGD" id="S000003898">
    <property type="gene designation" value="MET5"/>
</dbReference>
<dbReference type="VEuPathDB" id="FungiDB:YJR137C"/>
<dbReference type="eggNOG" id="KOG0560">
    <property type="taxonomic scope" value="Eukaryota"/>
</dbReference>
<dbReference type="HOGENOM" id="CLU_001975_2_1_1"/>
<dbReference type="InParanoid" id="P47169"/>
<dbReference type="OMA" id="CSRPWLA"/>
<dbReference type="OrthoDB" id="1688044at2759"/>
<dbReference type="BioCyc" id="YEAST:MONOMER3O-22"/>
<dbReference type="UniPathway" id="UPA00140">
    <property type="reaction ID" value="UER00207"/>
</dbReference>
<dbReference type="BioGRID-ORCS" id="853602">
    <property type="hits" value="0 hits in 10 CRISPR screens"/>
</dbReference>
<dbReference type="CD-CODE" id="E03F929F">
    <property type="entry name" value="Stress granule"/>
</dbReference>
<dbReference type="PRO" id="PR:P47169"/>
<dbReference type="Proteomes" id="UP000002311">
    <property type="component" value="Chromosome X"/>
</dbReference>
<dbReference type="RNAct" id="P47169">
    <property type="molecule type" value="protein"/>
</dbReference>
<dbReference type="GO" id="GO:0071944">
    <property type="term" value="C:cell periphery"/>
    <property type="evidence" value="ECO:0007005"/>
    <property type="project" value="SGD"/>
</dbReference>
<dbReference type="GO" id="GO:0005737">
    <property type="term" value="C:cytoplasm"/>
    <property type="evidence" value="ECO:0007005"/>
    <property type="project" value="SGD"/>
</dbReference>
<dbReference type="GO" id="GO:0010494">
    <property type="term" value="C:cytoplasmic stress granule"/>
    <property type="evidence" value="ECO:0007005"/>
    <property type="project" value="SGD"/>
</dbReference>
<dbReference type="GO" id="GO:0000324">
    <property type="term" value="C:fungal-type vacuole"/>
    <property type="evidence" value="ECO:0007005"/>
    <property type="project" value="SGD"/>
</dbReference>
<dbReference type="GO" id="GO:0009337">
    <property type="term" value="C:sulfite reductase complex (NADPH)"/>
    <property type="evidence" value="ECO:0000314"/>
    <property type="project" value="SGD"/>
</dbReference>
<dbReference type="GO" id="GO:0051539">
    <property type="term" value="F:4 iron, 4 sulfur cluster binding"/>
    <property type="evidence" value="ECO:0007669"/>
    <property type="project" value="UniProtKB-KW"/>
</dbReference>
<dbReference type="GO" id="GO:0010181">
    <property type="term" value="F:FMN binding"/>
    <property type="evidence" value="ECO:0007669"/>
    <property type="project" value="InterPro"/>
</dbReference>
<dbReference type="GO" id="GO:0020037">
    <property type="term" value="F:heme binding"/>
    <property type="evidence" value="ECO:0007669"/>
    <property type="project" value="InterPro"/>
</dbReference>
<dbReference type="GO" id="GO:0046872">
    <property type="term" value="F:metal ion binding"/>
    <property type="evidence" value="ECO:0007669"/>
    <property type="project" value="UniProtKB-KW"/>
</dbReference>
<dbReference type="GO" id="GO:0004783">
    <property type="term" value="F:sulfite reductase (NADPH) activity"/>
    <property type="evidence" value="ECO:0007669"/>
    <property type="project" value="UniProtKB-EC"/>
</dbReference>
<dbReference type="GO" id="GO:0070814">
    <property type="term" value="P:hydrogen sulfide biosynthetic process"/>
    <property type="evidence" value="ECO:0007669"/>
    <property type="project" value="UniProtKB-UniPathway"/>
</dbReference>
<dbReference type="GO" id="GO:0000103">
    <property type="term" value="P:sulfate assimilation"/>
    <property type="evidence" value="ECO:0000315"/>
    <property type="project" value="SGD"/>
</dbReference>
<dbReference type="GO" id="GO:0000097">
    <property type="term" value="P:sulfur amino acid biosynthetic process"/>
    <property type="evidence" value="ECO:0000315"/>
    <property type="project" value="SGD"/>
</dbReference>
<dbReference type="FunFam" id="3.30.413.10:FF:000003">
    <property type="entry name" value="Sulfite reductase [NADPH] hemoprotein beta-component"/>
    <property type="match status" value="1"/>
</dbReference>
<dbReference type="FunFam" id="3.30.413.10:FF:000004">
    <property type="entry name" value="Sulfite reductase [NADPH] hemoprotein beta-component"/>
    <property type="match status" value="1"/>
</dbReference>
<dbReference type="FunFam" id="3.40.50.970:FF:000051">
    <property type="entry name" value="Sulfite reductase beta subunit"/>
    <property type="match status" value="1"/>
</dbReference>
<dbReference type="FunFam" id="3.40.50.360:FF:000016">
    <property type="entry name" value="Sulfite reductase subunit beta"/>
    <property type="match status" value="1"/>
</dbReference>
<dbReference type="Gene3D" id="3.40.50.360">
    <property type="match status" value="1"/>
</dbReference>
<dbReference type="Gene3D" id="3.40.50.920">
    <property type="match status" value="1"/>
</dbReference>
<dbReference type="Gene3D" id="3.40.50.970">
    <property type="match status" value="2"/>
</dbReference>
<dbReference type="Gene3D" id="3.90.480.20">
    <property type="match status" value="1"/>
</dbReference>
<dbReference type="Gene3D" id="3.30.413.10">
    <property type="entry name" value="Sulfite Reductase Hemoprotein, domain 1"/>
    <property type="match status" value="2"/>
</dbReference>
<dbReference type="Gene3D" id="3.90.480.10">
    <property type="entry name" value="Sulfite Reductase Hemoprotein,Domain 2"/>
    <property type="match status" value="1"/>
</dbReference>
<dbReference type="InterPro" id="IPR001094">
    <property type="entry name" value="Flavdoxin-like"/>
</dbReference>
<dbReference type="InterPro" id="IPR008254">
    <property type="entry name" value="Flavodoxin/NO_synth"/>
</dbReference>
<dbReference type="InterPro" id="IPR029039">
    <property type="entry name" value="Flavoprotein-like_sf"/>
</dbReference>
<dbReference type="InterPro" id="IPR005117">
    <property type="entry name" value="NiRdtase/SiRdtase_haem-b_fer"/>
</dbReference>
<dbReference type="InterPro" id="IPR036136">
    <property type="entry name" value="Nit/Sulf_reduc_fer-like_dom_sf"/>
</dbReference>
<dbReference type="InterPro" id="IPR006067">
    <property type="entry name" value="NO2/SO3_Rdtase_4Fe4S_dom"/>
</dbReference>
<dbReference type="InterPro" id="IPR045169">
    <property type="entry name" value="NO2/SO3_Rdtase_4Fe4S_prot"/>
</dbReference>
<dbReference type="InterPro" id="IPR045854">
    <property type="entry name" value="NO2/SO3_Rdtase_4Fe4S_sf"/>
</dbReference>
<dbReference type="InterPro" id="IPR006066">
    <property type="entry name" value="NO2/SO3_Rdtase_FeS/sirohaem_BS"/>
</dbReference>
<dbReference type="InterPro" id="IPR029061">
    <property type="entry name" value="THDP-binding"/>
</dbReference>
<dbReference type="InterPro" id="IPR009014">
    <property type="entry name" value="Transketo_C/PFOR_II"/>
</dbReference>
<dbReference type="NCBIfam" id="NF010029">
    <property type="entry name" value="PRK13504.1"/>
    <property type="match status" value="1"/>
</dbReference>
<dbReference type="PANTHER" id="PTHR11493:SF47">
    <property type="entry name" value="SULFITE REDUCTASE [NADPH] SUBUNIT BETA"/>
    <property type="match status" value="1"/>
</dbReference>
<dbReference type="PANTHER" id="PTHR11493">
    <property type="entry name" value="SULFITE REDUCTASE [NADPH] SUBUNIT BETA-RELATED"/>
    <property type="match status" value="1"/>
</dbReference>
<dbReference type="Pfam" id="PF00258">
    <property type="entry name" value="Flavodoxin_1"/>
    <property type="match status" value="1"/>
</dbReference>
<dbReference type="Pfam" id="PF01077">
    <property type="entry name" value="NIR_SIR"/>
    <property type="match status" value="1"/>
</dbReference>
<dbReference type="Pfam" id="PF03460">
    <property type="entry name" value="NIR_SIR_ferr"/>
    <property type="match status" value="2"/>
</dbReference>
<dbReference type="PRINTS" id="PR00369">
    <property type="entry name" value="FLAVODOXIN"/>
</dbReference>
<dbReference type="PRINTS" id="PR00397">
    <property type="entry name" value="SIROHAEM"/>
</dbReference>
<dbReference type="SUPFAM" id="SSF52218">
    <property type="entry name" value="Flavoproteins"/>
    <property type="match status" value="1"/>
</dbReference>
<dbReference type="SUPFAM" id="SSF56014">
    <property type="entry name" value="Nitrite and sulphite reductase 4Fe-4S domain-like"/>
    <property type="match status" value="2"/>
</dbReference>
<dbReference type="SUPFAM" id="SSF55124">
    <property type="entry name" value="Nitrite/Sulfite reductase N-terminal domain-like"/>
    <property type="match status" value="2"/>
</dbReference>
<dbReference type="SUPFAM" id="SSF52518">
    <property type="entry name" value="Thiamin diphosphate-binding fold (THDP-binding)"/>
    <property type="match status" value="1"/>
</dbReference>
<dbReference type="SUPFAM" id="SSF52922">
    <property type="entry name" value="TK C-terminal domain-like"/>
    <property type="match status" value="1"/>
</dbReference>
<dbReference type="PROSITE" id="PS50902">
    <property type="entry name" value="FLAVODOXIN_LIKE"/>
    <property type="match status" value="1"/>
</dbReference>
<dbReference type="PROSITE" id="PS00365">
    <property type="entry name" value="NIR_SIR"/>
    <property type="match status" value="1"/>
</dbReference>
<name>MET5_YEAST</name>
<feature type="chain" id="PRO_0000199968" description="Sulfite reductase [NADPH] subunit beta">
    <location>
        <begin position="1"/>
        <end position="1442"/>
    </location>
</feature>
<feature type="domain" description="Flavodoxin-like" evidence="2">
    <location>
        <begin position="682"/>
        <end position="831"/>
    </location>
</feature>
<feature type="binding site" evidence="1">
    <location>
        <position position="1300"/>
    </location>
    <ligand>
        <name>[4Fe-4S] cluster</name>
        <dbReference type="ChEBI" id="CHEBI:49883"/>
    </ligand>
</feature>
<feature type="binding site" evidence="1">
    <location>
        <position position="1306"/>
    </location>
    <ligand>
        <name>[4Fe-4S] cluster</name>
        <dbReference type="ChEBI" id="CHEBI:49883"/>
    </ligand>
</feature>
<feature type="binding site" evidence="1">
    <location>
        <position position="1345"/>
    </location>
    <ligand>
        <name>[4Fe-4S] cluster</name>
        <dbReference type="ChEBI" id="CHEBI:49883"/>
    </ligand>
</feature>
<feature type="binding site" evidence="1">
    <location>
        <position position="1349"/>
    </location>
    <ligand>
        <name>[4Fe-4S] cluster</name>
        <dbReference type="ChEBI" id="CHEBI:49883"/>
    </ligand>
</feature>
<feature type="binding site" description="axial binding residue" evidence="1">
    <location>
        <position position="1349"/>
    </location>
    <ligand>
        <name>siroheme</name>
        <dbReference type="ChEBI" id="CHEBI:60052"/>
    </ligand>
    <ligandPart>
        <name>Fe</name>
        <dbReference type="ChEBI" id="CHEBI:18248"/>
    </ligandPart>
</feature>
<feature type="modified residue" description="Phosphoserine" evidence="6">
    <location>
        <position position="903"/>
    </location>
</feature>
<reference key="1">
    <citation type="journal article" date="1996" name="EMBO J.">
        <title>Complete nucleotide sequence of Saccharomyces cerevisiae chromosome X.</title>
        <authorList>
            <person name="Galibert F."/>
            <person name="Alexandraki D."/>
            <person name="Baur A."/>
            <person name="Boles E."/>
            <person name="Chalwatzis N."/>
            <person name="Chuat J.-C."/>
            <person name="Coster F."/>
            <person name="Cziepluch C."/>
            <person name="de Haan M."/>
            <person name="Domdey H."/>
            <person name="Durand P."/>
            <person name="Entian K.-D."/>
            <person name="Gatius M."/>
            <person name="Goffeau A."/>
            <person name="Grivell L.A."/>
            <person name="Hennemann A."/>
            <person name="Herbert C.J."/>
            <person name="Heumann K."/>
            <person name="Hilger F."/>
            <person name="Hollenberg C.P."/>
            <person name="Huang M.-E."/>
            <person name="Jacq C."/>
            <person name="Jauniaux J.-C."/>
            <person name="Katsoulou C."/>
            <person name="Kirchrath L."/>
            <person name="Kleine K."/>
            <person name="Kordes E."/>
            <person name="Koetter P."/>
            <person name="Liebl S."/>
            <person name="Louis E.J."/>
            <person name="Manus V."/>
            <person name="Mewes H.-W."/>
            <person name="Miosga T."/>
            <person name="Obermaier B."/>
            <person name="Perea J."/>
            <person name="Pohl T.M."/>
            <person name="Portetelle D."/>
            <person name="Pujol A."/>
            <person name="Purnelle B."/>
            <person name="Ramezani Rad M."/>
            <person name="Rasmussen S.W."/>
            <person name="Rose M."/>
            <person name="Rossau R."/>
            <person name="Schaaff-Gerstenschlaeger I."/>
            <person name="Smits P.H.M."/>
            <person name="Scarcez T."/>
            <person name="Soriano N."/>
            <person name="To Van D."/>
            <person name="Tzermia M."/>
            <person name="Van Broekhoven A."/>
            <person name="Vandenbol M."/>
            <person name="Wedler H."/>
            <person name="von Wettstein D."/>
            <person name="Wambutt R."/>
            <person name="Zagulski M."/>
            <person name="Zollner A."/>
            <person name="Karpfinger-Hartl L."/>
        </authorList>
    </citation>
    <scope>NUCLEOTIDE SEQUENCE [LARGE SCALE GENOMIC DNA]</scope>
    <source>
        <strain>ATCC 204508 / S288c</strain>
    </source>
</reference>
<reference key="2">
    <citation type="journal article" date="2014" name="G3 (Bethesda)">
        <title>The reference genome sequence of Saccharomyces cerevisiae: Then and now.</title>
        <authorList>
            <person name="Engel S.R."/>
            <person name="Dietrich F.S."/>
            <person name="Fisk D.G."/>
            <person name="Binkley G."/>
            <person name="Balakrishnan R."/>
            <person name="Costanzo M.C."/>
            <person name="Dwight S.S."/>
            <person name="Hitz B.C."/>
            <person name="Karra K."/>
            <person name="Nash R.S."/>
            <person name="Weng S."/>
            <person name="Wong E.D."/>
            <person name="Lloyd P."/>
            <person name="Skrzypek M.S."/>
            <person name="Miyasato S.R."/>
            <person name="Simison M."/>
            <person name="Cherry J.M."/>
        </authorList>
    </citation>
    <scope>GENOME REANNOTATION</scope>
    <source>
        <strain>ATCC 204508 / S288c</strain>
    </source>
</reference>
<reference key="3">
    <citation type="journal article" date="1982" name="Biochim. Biophys. Acta">
        <title>Studies on yeast sulfite reductase. IV. Structure and steady-state kinetics.</title>
        <authorList>
            <person name="Kobayashi K."/>
            <person name="Yoshimoto A."/>
        </authorList>
    </citation>
    <scope>CHARACTERIZATION</scope>
</reference>
<reference key="4">
    <citation type="journal article" date="1996" name="Proc. Natl. Acad. Sci. U.S.A.">
        <title>Linking genome and proteome by mass spectrometry: large-scale identification of yeast proteins from two dimensional gels.</title>
        <authorList>
            <person name="Shevchenko A."/>
            <person name="Jensen O.N."/>
            <person name="Podtelejnikov A.V."/>
            <person name="Sagliocco F."/>
            <person name="Wilm M."/>
            <person name="Vorm O."/>
            <person name="Mortensen P."/>
            <person name="Shevchenko A."/>
            <person name="Boucherie H."/>
            <person name="Mann M."/>
        </authorList>
    </citation>
    <scope>IDENTIFICATION BY MASS SPECTROMETRY</scope>
</reference>
<reference key="5">
    <citation type="journal article" date="1997" name="Genetics">
        <title>Large scale identification of genes involved in cell surface biosynthesis and architecture in Saccharomyces cerevisiae.</title>
        <authorList>
            <person name="Lussier M."/>
            <person name="White A.-M."/>
            <person name="Sheraton J."/>
            <person name="di Paolo T."/>
            <person name="Treadwell J."/>
            <person name="Southard S.B."/>
            <person name="Horenstein C.I."/>
            <person name="Chen-Weiner J."/>
            <person name="Ram A.F.J."/>
            <person name="Kapteyn J.C."/>
            <person name="Roemer T.W."/>
            <person name="Vo D.H."/>
            <person name="Bondoc D.C."/>
            <person name="Hall J."/>
            <person name="Zhong W.-W."/>
            <person name="Sdicu A.-M."/>
            <person name="Davies J."/>
            <person name="Klis F.M."/>
            <person name="Robbins P.W."/>
            <person name="Bussey H."/>
        </authorList>
    </citation>
    <scope>IDENTIFICATION</scope>
</reference>
<reference key="6">
    <citation type="journal article" date="2003" name="Nature">
        <title>Global analysis of protein localization in budding yeast.</title>
        <authorList>
            <person name="Huh W.-K."/>
            <person name="Falvo J.V."/>
            <person name="Gerke L.C."/>
            <person name="Carroll A.S."/>
            <person name="Howson R.W."/>
            <person name="Weissman J.S."/>
            <person name="O'Shea E.K."/>
        </authorList>
    </citation>
    <scope>SUBCELLULAR LOCATION [LARGE SCALE ANALYSIS]</scope>
</reference>
<reference key="7">
    <citation type="journal article" date="2003" name="Nature">
        <title>Global analysis of protein expression in yeast.</title>
        <authorList>
            <person name="Ghaemmaghami S."/>
            <person name="Huh W.-K."/>
            <person name="Bower K."/>
            <person name="Howson R.W."/>
            <person name="Belle A."/>
            <person name="Dephoure N."/>
            <person name="O'Shea E.K."/>
            <person name="Weissman J.S."/>
        </authorList>
    </citation>
    <scope>LEVEL OF PROTEIN EXPRESSION [LARGE SCALE ANALYSIS]</scope>
</reference>
<reference key="8">
    <citation type="journal article" date="2008" name="Mol. Cell. Proteomics">
        <title>A multidimensional chromatography technology for in-depth phosphoproteome analysis.</title>
        <authorList>
            <person name="Albuquerque C.P."/>
            <person name="Smolka M.B."/>
            <person name="Payne S.H."/>
            <person name="Bafna V."/>
            <person name="Eng J."/>
            <person name="Zhou H."/>
        </authorList>
    </citation>
    <scope>IDENTIFICATION BY MASS SPECTROMETRY [LARGE SCALE ANALYSIS]</scope>
</reference>
<reference key="9">
    <citation type="journal article" date="2009" name="Science">
        <title>Global analysis of Cdk1 substrate phosphorylation sites provides insights into evolution.</title>
        <authorList>
            <person name="Holt L.J."/>
            <person name="Tuch B.B."/>
            <person name="Villen J."/>
            <person name="Johnson A.D."/>
            <person name="Gygi S.P."/>
            <person name="Morgan D.O."/>
        </authorList>
    </citation>
    <scope>PHOSPHORYLATION [LARGE SCALE ANALYSIS] AT SER-903</scope>
    <scope>IDENTIFICATION BY MASS SPECTROMETRY [LARGE SCALE ANALYSIS]</scope>
</reference>
<sequence length="1442" mass="161219">MTASDLLTLPQLLAQYSSSAPQNKVFYTTSTKNSHSSFKGLESVATDATHLLNNQDPLNTIKDQLSKDILTTVFTDETTLVKSIHHLYSLPNKLPLVITVDLNLQDYSAIPALKDLSFPILISSDLQTAISNADSSYKIATSSLTPVFHFLNLEKIGTSTAIEQDIDFPTLEIANEETKVALSEATDSLTNFELVKGKESITTVIVNLSPYDAEFSSVLPSNVGLIKIRVYRPWNFSKFLEILPSSVTKIAVLQGVSKKSQSNEFQPFLLDFFGNFNELVSRNIEQVVLTNIGNVNDYGNVINTVISNINKKEPDNNLFLGESNEKAEEQAEVTQLISSVKKVVNLEDAYIKVLKQLFSSNLQILNQFSSETIEPSNPEFGFGRFLKQEAQREELISLAKTSLDPSLYLSEDANKIVQLLSKWLSFNGRDLDEAQLQEANATGLEIFQLLQSNQDSSTVLKFLKIAPTSDSFIFKSSWLIGSDAWSYDLGHSGIQQVLSSRKNINVLLIDSEPYDHRKQNQDRKKDVGLYAMNYYSAYVASVAVYASYTQLLTAIIEASKYNGPSIVLAYLPYNSENDTPLEVLKETKNAVESGYWPLYRFNPVYDDPSTDKEAFSLDSSVIRKQLQDFLDRENKLTLLTRKDPSLSRNLKQSAGDALTRKQEKRSKAAFDQLLEGLSGPPLHVYYASDGGNAANLAKRLAARASARGLKATVLSMDDIILEELPGEENVVFITSTAGQGEFPQDGKSFWEALKNDTDLDLASLNVAVFGLGDSEYWPRKEDKHYFNKPSQDLFKRLELLSAKALIPLGLGDDQDADGFQTAYSEWEPKLWEALGVSGAAVDDEPKPVTNEDIKRESNFLRGTISENLKDTSSGGVTHANEQLMKFHGIYTQDDRDIREIRKSQGLEPYYMFMARARLPGGKTTPQQWLALDHLSDTSGNGTLKLTTRATFQIHGVLKKNLKHTLRGMNAVLMDTLAAAGDVNRNVMVSALPTNAKVHQQIADMGKLISDHFLPKTTAYHEVWLEGPEEQDDDPSWPSIFENRKDGPRKKKTLVSGNALVDIEPIYGPTYLPRKFKFNIAVPPYNDVDVLSIDVGLVAIVNPETQIVEGYNVFVGGGMGTTHNNKKTYPRLGSCLGFVKTEDIIPPLEGIVIVQRDHGDRKDRKHARLKYTVDDMGVEGFKQKVEEYWGKKFEPERPFEFKSNIDYFGWIKDETGLNHFTAFIENGRVEDTPDLPQKTGIRKVAEYMLKTNSGHFRLTGNQHLVISNITDEHVAGIKSILKTYKLDNTDFSGLRLSSSSCVGLPTCGLAFAESERFLPDIITQLEDCLEEYGLRHDSIIMRMTGCPNGCSRPWLGELALVGKAPHTYNLMLGGGYLGQRLNKLYKANVKDEEIVDYIKPLFKRYALEREEGEHFGDFCIRVGIIKPTTEGKYFHEDVSEDAY</sequence>
<keyword id="KW-0004">4Fe-4S</keyword>
<keyword id="KW-0963">Cytoplasm</keyword>
<keyword id="KW-0349">Heme</keyword>
<keyword id="KW-0408">Iron</keyword>
<keyword id="KW-0411">Iron-sulfur</keyword>
<keyword id="KW-0479">Metal-binding</keyword>
<keyword id="KW-0521">NADP</keyword>
<keyword id="KW-0560">Oxidoreductase</keyword>
<keyword id="KW-0597">Phosphoprotein</keyword>
<keyword id="KW-1185">Reference proteome</keyword>
<comment type="function">
    <text>Catalyzes the reduction of sulfite to sulfide, one of several activities required for the biosynthesis of L-cysteine from sulfate.</text>
</comment>
<comment type="catalytic activity">
    <reaction>
        <text>hydrogen sulfide + 3 NADP(+) + 3 H2O = sulfite + 3 NADPH + 4 H(+)</text>
        <dbReference type="Rhea" id="RHEA:13801"/>
        <dbReference type="ChEBI" id="CHEBI:15377"/>
        <dbReference type="ChEBI" id="CHEBI:15378"/>
        <dbReference type="ChEBI" id="CHEBI:17359"/>
        <dbReference type="ChEBI" id="CHEBI:29919"/>
        <dbReference type="ChEBI" id="CHEBI:57783"/>
        <dbReference type="ChEBI" id="CHEBI:58349"/>
        <dbReference type="EC" id="1.8.1.2"/>
    </reaction>
</comment>
<comment type="cofactor">
    <cofactor evidence="1">
        <name>siroheme</name>
        <dbReference type="ChEBI" id="CHEBI:60052"/>
    </cofactor>
    <text evidence="1">Binds 1 siroheme per subunit.</text>
</comment>
<comment type="cofactor">
    <cofactor evidence="1">
        <name>[4Fe-4S] cluster</name>
        <dbReference type="ChEBI" id="CHEBI:49883"/>
    </cofactor>
    <text evidence="1">Binds 1 [4Fe-4S] cluster per subunit.</text>
</comment>
<comment type="pathway">
    <text>Sulfur metabolism; hydrogen sulfide biosynthesis; hydrogen sulfide from sulfite (NADPH route): step 1/1.</text>
</comment>
<comment type="subunit">
    <text>Alpha(2)-beta(2). The alpha component is a flavoprotein, the beta component is a hemoprotein.</text>
</comment>
<comment type="interaction">
    <interactant intactId="EBI-25702">
        <id>P47169</id>
    </interactant>
    <interactant intactId="EBI-11476">
        <id>P39692</id>
        <label>MET10</label>
    </interactant>
    <organismsDiffer>false</organismsDiffer>
    <experiments>2</experiments>
</comment>
<comment type="subcellular location">
    <subcellularLocation>
        <location evidence="3">Cytoplasm</location>
    </subcellularLocation>
</comment>
<comment type="miscellaneous">
    <text evidence="4">Present with 2900 molecules/cell in log phase SD medium.</text>
</comment>
<comment type="similarity">
    <text evidence="5">Belongs to the nitrite and sulfite reductase 4Fe-4S domain family.</text>
</comment>
<proteinExistence type="evidence at protein level"/>
<evidence type="ECO:0000250" key="1"/>
<evidence type="ECO:0000255" key="2">
    <source>
        <dbReference type="PROSITE-ProRule" id="PRU00088"/>
    </source>
</evidence>
<evidence type="ECO:0000269" key="3">
    <source>
    </source>
</evidence>
<evidence type="ECO:0000269" key="4">
    <source>
    </source>
</evidence>
<evidence type="ECO:0000305" key="5"/>
<evidence type="ECO:0007744" key="6">
    <source>
    </source>
</evidence>